<gene>
    <name type="primary">TSPAN1</name>
    <name type="ORF">QtsA-14223</name>
</gene>
<evidence type="ECO:0000250" key="1"/>
<evidence type="ECO:0000250" key="2">
    <source>
        <dbReference type="UniProtKB" id="O60635"/>
    </source>
</evidence>
<evidence type="ECO:0000250" key="3">
    <source>
        <dbReference type="UniProtKB" id="Q6AYR9"/>
    </source>
</evidence>
<evidence type="ECO:0000255" key="4"/>
<evidence type="ECO:0000305" key="5"/>
<sequence>MQCFSFIKTIMILFNLLIFLCGAALLAVGIWVSIDGASFLKIFGPLSSSAMQFVNVGYFLIAAGAVVFALGFLGCYGAQTESKCALMTFFFILLLIFIAEVAAAVVALVYTTMAEHFLTLLVVPAIKKDYGSQKDFTQVWNTTMTELKCCGFTNYTDFEDSPYVRENNAFPPFCCNNVTNTVNETCTKEKADNQKVEGCFQQLLYDIRTNAVTVGGVAAGIGGLELAAMIVSMYLYCNLQ</sequence>
<feature type="chain" id="PRO_0000382890" description="Tetraspanin-1">
    <location>
        <begin position="1"/>
        <end position="240"/>
    </location>
</feature>
<feature type="topological domain" description="Cytoplasmic" evidence="4">
    <location>
        <begin position="1"/>
        <end position="9"/>
    </location>
</feature>
<feature type="transmembrane region" description="Helical" evidence="4">
    <location>
        <begin position="10"/>
        <end position="30"/>
    </location>
</feature>
<feature type="topological domain" description="Extracellular" evidence="4">
    <location>
        <begin position="31"/>
        <end position="52"/>
    </location>
</feature>
<feature type="transmembrane region" description="Helical" evidence="4">
    <location>
        <begin position="53"/>
        <end position="73"/>
    </location>
</feature>
<feature type="topological domain" description="Cytoplasmic" evidence="4">
    <location>
        <begin position="74"/>
        <end position="88"/>
    </location>
</feature>
<feature type="transmembrane region" description="Helical" evidence="4">
    <location>
        <begin position="89"/>
        <end position="109"/>
    </location>
</feature>
<feature type="topological domain" description="Extracellular" evidence="4">
    <location>
        <begin position="110"/>
        <end position="210"/>
    </location>
</feature>
<feature type="transmembrane region" description="Helical" evidence="4">
    <location>
        <begin position="211"/>
        <end position="231"/>
    </location>
</feature>
<feature type="topological domain" description="Cytoplasmic" evidence="4">
    <location>
        <begin position="232"/>
        <end position="240"/>
    </location>
</feature>
<feature type="glycosylation site" description="N-linked (GlcNAc...) asparagine" evidence="4">
    <location>
        <position position="154"/>
    </location>
</feature>
<keyword id="KW-0325">Glycoprotein</keyword>
<keyword id="KW-0458">Lysosome</keyword>
<keyword id="KW-0472">Membrane</keyword>
<keyword id="KW-1185">Reference proteome</keyword>
<keyword id="KW-0812">Transmembrane</keyword>
<keyword id="KW-1133">Transmembrane helix</keyword>
<name>TSN1_MACFA</name>
<accession>Q4R7W6</accession>
<dbReference type="EMBL" id="AB168695">
    <property type="protein sequence ID" value="BAE00806.1"/>
    <property type="molecule type" value="mRNA"/>
</dbReference>
<dbReference type="RefSeq" id="NP_001270353.1">
    <property type="nucleotide sequence ID" value="NM_001283424.1"/>
</dbReference>
<dbReference type="RefSeq" id="XP_005543551.1">
    <property type="nucleotide sequence ID" value="XM_005543494.2"/>
</dbReference>
<dbReference type="RefSeq" id="XP_045227761.1">
    <property type="nucleotide sequence ID" value="XM_045371826.1"/>
</dbReference>
<dbReference type="SMR" id="Q4R7W6"/>
<dbReference type="STRING" id="9541.ENSMFAP00000038001"/>
<dbReference type="GlyCosmos" id="Q4R7W6">
    <property type="glycosylation" value="1 site, No reported glycans"/>
</dbReference>
<dbReference type="Ensembl" id="ENSMFAT00000075213.1">
    <property type="protein sequence ID" value="ENSMFAP00000061109.1"/>
    <property type="gene ID" value="ENSMFAG00000042909.2"/>
</dbReference>
<dbReference type="GeneID" id="101867057"/>
<dbReference type="VEuPathDB" id="HostDB:ENSMFAG00000042909"/>
<dbReference type="eggNOG" id="KOG3882">
    <property type="taxonomic scope" value="Eukaryota"/>
</dbReference>
<dbReference type="GeneTree" id="ENSGT00940000158851"/>
<dbReference type="OMA" id="CCWTNST"/>
<dbReference type="Proteomes" id="UP000233100">
    <property type="component" value="Chromosome 1"/>
</dbReference>
<dbReference type="Bgee" id="ENSMFAG00000042909">
    <property type="expression patterns" value="Expressed in colon and 4 other cell types or tissues"/>
</dbReference>
<dbReference type="GO" id="GO:0030054">
    <property type="term" value="C:cell junction"/>
    <property type="evidence" value="ECO:0007669"/>
    <property type="project" value="Ensembl"/>
</dbReference>
<dbReference type="GO" id="GO:0005765">
    <property type="term" value="C:lysosomal membrane"/>
    <property type="evidence" value="ECO:0007669"/>
    <property type="project" value="UniProtKB-SubCell"/>
</dbReference>
<dbReference type="GO" id="GO:0005654">
    <property type="term" value="C:nucleoplasm"/>
    <property type="evidence" value="ECO:0007669"/>
    <property type="project" value="Ensembl"/>
</dbReference>
<dbReference type="GO" id="GO:0048471">
    <property type="term" value="C:perinuclear region of cytoplasm"/>
    <property type="evidence" value="ECO:0007669"/>
    <property type="project" value="Ensembl"/>
</dbReference>
<dbReference type="GO" id="GO:0005886">
    <property type="term" value="C:plasma membrane"/>
    <property type="evidence" value="ECO:0007669"/>
    <property type="project" value="Ensembl"/>
</dbReference>
<dbReference type="GO" id="GO:0031982">
    <property type="term" value="C:vesicle"/>
    <property type="evidence" value="ECO:0007669"/>
    <property type="project" value="Ensembl"/>
</dbReference>
<dbReference type="GO" id="GO:0050821">
    <property type="term" value="P:protein stabilization"/>
    <property type="evidence" value="ECO:0007669"/>
    <property type="project" value="Ensembl"/>
</dbReference>
<dbReference type="CDD" id="cd03156">
    <property type="entry name" value="uroplakin_I_like_LEL"/>
    <property type="match status" value="1"/>
</dbReference>
<dbReference type="FunFam" id="1.10.1450.10:FF:000020">
    <property type="entry name" value="Tetraspanin"/>
    <property type="match status" value="1"/>
</dbReference>
<dbReference type="Gene3D" id="1.10.1450.10">
    <property type="entry name" value="Tetraspanin"/>
    <property type="match status" value="1"/>
</dbReference>
<dbReference type="InterPro" id="IPR018499">
    <property type="entry name" value="Tetraspanin/Peripherin"/>
</dbReference>
<dbReference type="InterPro" id="IPR000301">
    <property type="entry name" value="Tetraspanin_animals"/>
</dbReference>
<dbReference type="InterPro" id="IPR018503">
    <property type="entry name" value="Tetraspanin_CS"/>
</dbReference>
<dbReference type="InterPro" id="IPR008952">
    <property type="entry name" value="Tetraspanin_EC2_sf"/>
</dbReference>
<dbReference type="PANTHER" id="PTHR19282">
    <property type="entry name" value="TETRASPANIN"/>
    <property type="match status" value="1"/>
</dbReference>
<dbReference type="PANTHER" id="PTHR19282:SF216">
    <property type="entry name" value="TETRASPANIN-1"/>
    <property type="match status" value="1"/>
</dbReference>
<dbReference type="Pfam" id="PF00335">
    <property type="entry name" value="Tetraspanin"/>
    <property type="match status" value="1"/>
</dbReference>
<dbReference type="PIRSF" id="PIRSF002419">
    <property type="entry name" value="Tetraspanin"/>
    <property type="match status" value="1"/>
</dbReference>
<dbReference type="PRINTS" id="PR00259">
    <property type="entry name" value="TMFOUR"/>
</dbReference>
<dbReference type="SUPFAM" id="SSF48652">
    <property type="entry name" value="Tetraspanin"/>
    <property type="match status" value="1"/>
</dbReference>
<dbReference type="PROSITE" id="PS00421">
    <property type="entry name" value="TM4_1"/>
    <property type="match status" value="1"/>
</dbReference>
<protein>
    <recommendedName>
        <fullName>Tetraspanin-1</fullName>
        <shortName>Tspan-1</shortName>
    </recommendedName>
</protein>
<organism>
    <name type="scientific">Macaca fascicularis</name>
    <name type="common">Crab-eating macaque</name>
    <name type="synonym">Cynomolgus monkey</name>
    <dbReference type="NCBI Taxonomy" id="9541"/>
    <lineage>
        <taxon>Eukaryota</taxon>
        <taxon>Metazoa</taxon>
        <taxon>Chordata</taxon>
        <taxon>Craniata</taxon>
        <taxon>Vertebrata</taxon>
        <taxon>Euteleostomi</taxon>
        <taxon>Mammalia</taxon>
        <taxon>Eutheria</taxon>
        <taxon>Euarchontoglires</taxon>
        <taxon>Primates</taxon>
        <taxon>Haplorrhini</taxon>
        <taxon>Catarrhini</taxon>
        <taxon>Cercopithecidae</taxon>
        <taxon>Cercopithecinae</taxon>
        <taxon>Macaca</taxon>
    </lineage>
</organism>
<comment type="function">
    <text evidence="2 3">Structural component of specialized membrane microdomains known as tetraspanin-enriched microdomains (TERMs), which act as platforms for receptor clustering and signaling. Participates thereby in diverse biological functions such as cell signal transduction, adhesion, migration and protein trafficking (By similarity). Regulates neuronal differentiation in response to NGF by facilitating NGF-mediated activation of NTRK1/TRKA receptor tyrosine kinase and subsequent downstream signaling pathways (By similarity). Plays a role in the inhibition of TNFalpha-induced apoptosis. Mechanistically, inhibits the NF-kappa-B signaling pathway by blocking phosphorylation of CHUK. Also promotes the stability of the thiamine transporter 1/SLC19A2 in intestinal epithelial cells leading to an increase of thiamine uptake process (By similarity).</text>
</comment>
<comment type="subunit">
    <text evidence="2 3">Interacts with SLC19A2 (By similarity). Interacts with NTRK1/TRKA (By similarity).</text>
</comment>
<comment type="subcellular location">
    <subcellularLocation>
        <location evidence="1">Lysosome membrane</location>
        <topology evidence="1">Multi-pass membrane protein</topology>
    </subcellularLocation>
</comment>
<comment type="similarity">
    <text evidence="5">Belongs to the tetraspanin (TM4SF) family.</text>
</comment>
<reference key="1">
    <citation type="submission" date="2005-06" db="EMBL/GenBank/DDBJ databases">
        <title>DNA sequences of macaque genes expressed in brain or testis and its evolutionary implications.</title>
        <authorList>
            <consortium name="International consortium for macaque cDNA sequencing and analysis"/>
        </authorList>
    </citation>
    <scope>NUCLEOTIDE SEQUENCE [LARGE SCALE MRNA]</scope>
    <source>
        <tissue>Testis</tissue>
    </source>
</reference>
<proteinExistence type="evidence at transcript level"/>